<organism>
    <name type="scientific">Escherichia coli (strain K12 / DH10B)</name>
    <dbReference type="NCBI Taxonomy" id="316385"/>
    <lineage>
        <taxon>Bacteria</taxon>
        <taxon>Pseudomonadati</taxon>
        <taxon>Pseudomonadota</taxon>
        <taxon>Gammaproteobacteria</taxon>
        <taxon>Enterobacterales</taxon>
        <taxon>Enterobacteriaceae</taxon>
        <taxon>Escherichia</taxon>
    </lineage>
</organism>
<keyword id="KW-0281">Fimbrium</keyword>
<keyword id="KW-0732">Signal</keyword>
<sequence>MKKKVLAIALVTVFTGMGVAQAADVTAQAVATWSATAKKDTTSKLVVTPLGSLAFQYAEGIKGFNSQKGLFDVAIEGDSTATAFKLTSRLITNTLTQLDTSGSTLNVGVDYNGAAVEKTGDTVMIDTANGVLGGNLSPLANGYNASNRTTAQDGFTFSIISGTTNGTTAVTDYSTLPEGIWSGDVSVQFDATWTS</sequence>
<gene>
    <name type="primary">ecpA</name>
    <name type="synonym">matB</name>
    <name type="ordered locus">ECDH10B_0281</name>
</gene>
<name>ECPA_ECODH</name>
<feature type="signal peptide" evidence="2">
    <location>
        <begin position="1"/>
        <end position="22"/>
    </location>
</feature>
<feature type="chain" id="PRO_0000367922" description="Common pilus major fimbrillin subunit EcpA">
    <location>
        <begin position="23"/>
        <end position="195"/>
    </location>
</feature>
<reference key="1">
    <citation type="journal article" date="2008" name="J. Bacteriol.">
        <title>The complete genome sequence of Escherichia coli DH10B: insights into the biology of a laboratory workhorse.</title>
        <authorList>
            <person name="Durfee T."/>
            <person name="Nelson R."/>
            <person name="Baldwin S."/>
            <person name="Plunkett G. III"/>
            <person name="Burland V."/>
            <person name="Mau B."/>
            <person name="Petrosino J.F."/>
            <person name="Qin X."/>
            <person name="Muzny D.M."/>
            <person name="Ayele M."/>
            <person name="Gibbs R.A."/>
            <person name="Csorgo B."/>
            <person name="Posfai G."/>
            <person name="Weinstock G.M."/>
            <person name="Blattner F.R."/>
        </authorList>
    </citation>
    <scope>NUCLEOTIDE SEQUENCE [LARGE SCALE GENOMIC DNA]</scope>
    <source>
        <strain>K12 / DH10B</strain>
    </source>
</reference>
<protein>
    <recommendedName>
        <fullName>Common pilus major fimbrillin subunit EcpA</fullName>
    </recommendedName>
    <alternativeName>
        <fullName>MatB fimbrillin</fullName>
    </alternativeName>
</protein>
<comment type="function">
    <text evidence="1">Part of the ecpRABCDE operon, which encodes the E.coli common pilus (ECP). ECP is found in both commensal and pathogenic strains and plays a dual role in early-stage biofilm development and host cell recognition. Major subunit of the fimbria (By similarity).</text>
</comment>
<comment type="subunit">
    <text evidence="1">Self-associates. Forms filaments. Interacts with EcpD (By similarity).</text>
</comment>
<comment type="subcellular location">
    <subcellularLocation>
        <location evidence="1">Fimbrium</location>
    </subcellularLocation>
</comment>
<comment type="induction">
    <text evidence="1">Negatively regulated by H-NS. Positively regulated by IHF and EcpR (By similarity).</text>
</comment>
<comment type="similarity">
    <text evidence="3">Belongs to the EcpA/MatB fimbrillin family.</text>
</comment>
<proteinExistence type="inferred from homology"/>
<dbReference type="EMBL" id="CP000948">
    <property type="protein sequence ID" value="ACB01459.1"/>
    <property type="molecule type" value="Genomic_DNA"/>
</dbReference>
<dbReference type="RefSeq" id="WP_000730972.1">
    <property type="nucleotide sequence ID" value="NC_010473.1"/>
</dbReference>
<dbReference type="SMR" id="B1XE35"/>
<dbReference type="GeneID" id="75204620"/>
<dbReference type="KEGG" id="ecd:ECDH10B_0281"/>
<dbReference type="HOGENOM" id="CLU_120328_0_0_6"/>
<dbReference type="GO" id="GO:0009289">
    <property type="term" value="C:pilus"/>
    <property type="evidence" value="ECO:0007669"/>
    <property type="project" value="UniProtKB-SubCell"/>
</dbReference>
<dbReference type="Gene3D" id="2.60.40.3290">
    <property type="entry name" value="Fimbrial protein EcpA"/>
    <property type="match status" value="1"/>
</dbReference>
<dbReference type="InterPro" id="IPR016514">
    <property type="entry name" value="EcpA"/>
</dbReference>
<dbReference type="InterPro" id="IPR038478">
    <property type="entry name" value="Fimbrillin_EcpA_sf"/>
</dbReference>
<dbReference type="Pfam" id="PF16449">
    <property type="entry name" value="MatB"/>
    <property type="match status" value="1"/>
</dbReference>
<dbReference type="PIRSF" id="PIRSF007320">
    <property type="entry name" value="Fimbrillin_MatB"/>
    <property type="match status" value="1"/>
</dbReference>
<accession>B1XE35</accession>
<evidence type="ECO:0000250" key="1"/>
<evidence type="ECO:0000255" key="2"/>
<evidence type="ECO:0000305" key="3"/>